<dbReference type="EC" id="2.3.1.39"/>
<dbReference type="EMBL" id="LT708304">
    <property type="protein sequence ID" value="SIU00878.1"/>
    <property type="molecule type" value="Genomic_DNA"/>
</dbReference>
<dbReference type="RefSeq" id="NP_855916.1">
    <property type="nucleotide sequence ID" value="NC_002945.3"/>
</dbReference>
<dbReference type="RefSeq" id="WP_003411559.1">
    <property type="nucleotide sequence ID" value="NC_002945.4"/>
</dbReference>
<dbReference type="SMR" id="P63459"/>
<dbReference type="KEGG" id="mbo:BQ2027_MB2267"/>
<dbReference type="PATRIC" id="fig|233413.5.peg.2488"/>
<dbReference type="UniPathway" id="UPA00094"/>
<dbReference type="Proteomes" id="UP000001419">
    <property type="component" value="Chromosome"/>
</dbReference>
<dbReference type="GO" id="GO:0005829">
    <property type="term" value="C:cytosol"/>
    <property type="evidence" value="ECO:0007669"/>
    <property type="project" value="TreeGrafter"/>
</dbReference>
<dbReference type="GO" id="GO:0004314">
    <property type="term" value="F:[acyl-carrier-protein] S-malonyltransferase activity"/>
    <property type="evidence" value="ECO:0007669"/>
    <property type="project" value="UniProtKB-EC"/>
</dbReference>
<dbReference type="GO" id="GO:0006633">
    <property type="term" value="P:fatty acid biosynthetic process"/>
    <property type="evidence" value="ECO:0007669"/>
    <property type="project" value="UniProtKB-UniPathway"/>
</dbReference>
<dbReference type="FunFam" id="3.30.70.250:FF:000002">
    <property type="entry name" value="Malonyl CoA-ACP transacylase"/>
    <property type="match status" value="1"/>
</dbReference>
<dbReference type="Gene3D" id="3.30.70.250">
    <property type="entry name" value="Malonyl-CoA ACP transacylase, ACP-binding"/>
    <property type="match status" value="1"/>
</dbReference>
<dbReference type="Gene3D" id="3.40.366.10">
    <property type="entry name" value="Malonyl-Coenzyme A Acyl Carrier Protein, domain 2"/>
    <property type="match status" value="1"/>
</dbReference>
<dbReference type="InterPro" id="IPR001227">
    <property type="entry name" value="Ac_transferase_dom_sf"/>
</dbReference>
<dbReference type="InterPro" id="IPR014043">
    <property type="entry name" value="Acyl_transferase_dom"/>
</dbReference>
<dbReference type="InterPro" id="IPR016035">
    <property type="entry name" value="Acyl_Trfase/lysoPLipase"/>
</dbReference>
<dbReference type="InterPro" id="IPR050858">
    <property type="entry name" value="Mal-CoA-ACP_Trans/PKS_FabD"/>
</dbReference>
<dbReference type="InterPro" id="IPR016036">
    <property type="entry name" value="Malonyl_transacylase_ACP-bd"/>
</dbReference>
<dbReference type="PANTHER" id="PTHR42681">
    <property type="entry name" value="MALONYL-COA-ACYL CARRIER PROTEIN TRANSACYLASE, MITOCHONDRIAL"/>
    <property type="match status" value="1"/>
</dbReference>
<dbReference type="PANTHER" id="PTHR42681:SF1">
    <property type="entry name" value="MALONYL-COA-ACYL CARRIER PROTEIN TRANSACYLASE, MITOCHONDRIAL"/>
    <property type="match status" value="1"/>
</dbReference>
<dbReference type="Pfam" id="PF00698">
    <property type="entry name" value="Acyl_transf_1"/>
    <property type="match status" value="1"/>
</dbReference>
<dbReference type="SMART" id="SM00827">
    <property type="entry name" value="PKS_AT"/>
    <property type="match status" value="1"/>
</dbReference>
<dbReference type="SUPFAM" id="SSF52151">
    <property type="entry name" value="FabD/lysophospholipase-like"/>
    <property type="match status" value="1"/>
</dbReference>
<dbReference type="SUPFAM" id="SSF55048">
    <property type="entry name" value="Probable ACP-binding domain of malonyl-CoA ACP transacylase"/>
    <property type="match status" value="1"/>
</dbReference>
<protein>
    <recommendedName>
        <fullName>Malonyl CoA-acyl carrier protein transacylase</fullName>
        <shortName>MCT</shortName>
        <ecNumber>2.3.1.39</ecNumber>
    </recommendedName>
</protein>
<sequence length="302" mass="30788">MIALLAPGQGSQTEGMLSPWLQLPGAADQIAAWSKAADLDLARLGTTASTEEITDTAVAQPLIVAATLLAHQELARRCVLAGKDVIVAGHSVGEIAAYAIAGVIAADDAVALAATRGAEMAKACATEPTGMSAVLGGDETEVLSRLEQLDLVPANRNAAGQIVAAGRLTALEKLAEDPPAKARVRALGVAGAFHTEFMAPALDGFAAAAANIATADPTATLLSNRDGKPVTSAAAAMDTLVSQLTQPVRWDLCTATLREHTVTAIVEFPPAGTLSGIAKRELRGVPARAVKSPADLDELANL</sequence>
<accession>P63459</accession>
<accession>A0A1R3Y0K7</accession>
<accession>Q10501</accession>
<accession>X2BK93</accession>
<feature type="chain" id="PRO_0000194217" description="Malonyl CoA-acyl carrier protein transacylase">
    <location>
        <begin position="1"/>
        <end position="302"/>
    </location>
</feature>
<feature type="active site" evidence="1">
    <location>
        <position position="91"/>
    </location>
</feature>
<feature type="active site" evidence="1">
    <location>
        <position position="194"/>
    </location>
</feature>
<reference key="1">
    <citation type="journal article" date="2003" name="Proc. Natl. Acad. Sci. U.S.A.">
        <title>The complete genome sequence of Mycobacterium bovis.</title>
        <authorList>
            <person name="Garnier T."/>
            <person name="Eiglmeier K."/>
            <person name="Camus J.-C."/>
            <person name="Medina N."/>
            <person name="Mansoor H."/>
            <person name="Pryor M."/>
            <person name="Duthoy S."/>
            <person name="Grondin S."/>
            <person name="Lacroix C."/>
            <person name="Monsempe C."/>
            <person name="Simon S."/>
            <person name="Harris B."/>
            <person name="Atkin R."/>
            <person name="Doggett J."/>
            <person name="Mayes R."/>
            <person name="Keating L."/>
            <person name="Wheeler P.R."/>
            <person name="Parkhill J."/>
            <person name="Barrell B.G."/>
            <person name="Cole S.T."/>
            <person name="Gordon S.V."/>
            <person name="Hewinson R.G."/>
        </authorList>
    </citation>
    <scope>NUCLEOTIDE SEQUENCE [LARGE SCALE GENOMIC DNA]</scope>
    <source>
        <strain>ATCC BAA-935 / AF2122/97</strain>
    </source>
</reference>
<reference key="2">
    <citation type="journal article" date="2017" name="Genome Announc.">
        <title>Updated reference genome sequence and annotation of Mycobacterium bovis AF2122/97.</title>
        <authorList>
            <person name="Malone K.M."/>
            <person name="Farrell D."/>
            <person name="Stuber T.P."/>
            <person name="Schubert O.T."/>
            <person name="Aebersold R."/>
            <person name="Robbe-Austerman S."/>
            <person name="Gordon S.V."/>
        </authorList>
    </citation>
    <scope>NUCLEOTIDE SEQUENCE [LARGE SCALE GENOMIC DNA]</scope>
    <scope>GENOME REANNOTATION</scope>
    <source>
        <strain>ATCC BAA-935 / AF2122/97</strain>
    </source>
</reference>
<keyword id="KW-0012">Acyltransferase</keyword>
<keyword id="KW-0275">Fatty acid biosynthesis</keyword>
<keyword id="KW-0276">Fatty acid metabolism</keyword>
<keyword id="KW-0444">Lipid biosynthesis</keyword>
<keyword id="KW-0443">Lipid metabolism</keyword>
<keyword id="KW-1185">Reference proteome</keyword>
<keyword id="KW-0808">Transferase</keyword>
<gene>
    <name type="primary">fabD</name>
    <name type="ordered locus">BQ2027_MB2267</name>
</gene>
<name>FABD_MYCBO</name>
<proteinExistence type="inferred from homology"/>
<comment type="catalytic activity">
    <reaction>
        <text>holo-[ACP] + malonyl-CoA = malonyl-[ACP] + CoA</text>
        <dbReference type="Rhea" id="RHEA:41792"/>
        <dbReference type="Rhea" id="RHEA-COMP:9623"/>
        <dbReference type="Rhea" id="RHEA-COMP:9685"/>
        <dbReference type="ChEBI" id="CHEBI:57287"/>
        <dbReference type="ChEBI" id="CHEBI:57384"/>
        <dbReference type="ChEBI" id="CHEBI:64479"/>
        <dbReference type="ChEBI" id="CHEBI:78449"/>
        <dbReference type="EC" id="2.3.1.39"/>
    </reaction>
</comment>
<comment type="pathway">
    <text>Lipid metabolism; fatty acid biosynthesis.</text>
</comment>
<comment type="similarity">
    <text evidence="2">Belongs to the FabD family.</text>
</comment>
<evidence type="ECO:0000250" key="1"/>
<evidence type="ECO:0000305" key="2"/>
<organism>
    <name type="scientific">Mycobacterium bovis (strain ATCC BAA-935 / AF2122/97)</name>
    <dbReference type="NCBI Taxonomy" id="233413"/>
    <lineage>
        <taxon>Bacteria</taxon>
        <taxon>Bacillati</taxon>
        <taxon>Actinomycetota</taxon>
        <taxon>Actinomycetes</taxon>
        <taxon>Mycobacteriales</taxon>
        <taxon>Mycobacteriaceae</taxon>
        <taxon>Mycobacterium</taxon>
        <taxon>Mycobacterium tuberculosis complex</taxon>
    </lineage>
</organism>